<protein>
    <recommendedName>
        <fullName>Zinc-binding protein TroA</fullName>
    </recommendedName>
    <alternativeName>
        <fullName>Tromp-1</fullName>
    </alternativeName>
</protein>
<accession>P96116</accession>
<accession>Q56329</accession>
<reference key="1">
    <citation type="journal article" date="1995" name="J. Bacteriol.">
        <title>Porin activity and sequence analysis of a 31-kilodalton Treponema pallidum subsp. pallidum rare outer membrane protein (Tromp1).</title>
        <authorList>
            <person name="Blanco D.R."/>
            <person name="Champion C.I."/>
            <person name="Exner M.M."/>
            <person name="Erdjument-Bromage H."/>
            <person name="Hancock R.E."/>
            <person name="Tempst P."/>
            <person name="Miller J.N."/>
            <person name="Lovett M.A."/>
        </authorList>
    </citation>
    <scope>NUCLEOTIDE SEQUENCE [GENOMIC DNA]</scope>
    <source>
        <strain>Nichols</strain>
    </source>
</reference>
<reference key="2">
    <citation type="journal article" date="1997" name="Gene">
        <title>Identification and transcriptional analysis of a Treponema pallidum operon encoding a putative ABC transport system, an iron-activated repressor protein homolog, and a glycolytic pathway enzyme homolog.</title>
        <authorList>
            <person name="Hardham J.M."/>
            <person name="Stamm L.V."/>
            <person name="Porcella S.F."/>
            <person name="Frye J.G."/>
            <person name="Barnes N.Y."/>
            <person name="Howell J.K."/>
            <person name="Mueller S.L."/>
            <person name="Radolf J.D."/>
            <person name="Weinstock G.M."/>
            <person name="Norris S.J."/>
        </authorList>
    </citation>
    <scope>NUCLEOTIDE SEQUENCE [GENOMIC DNA]</scope>
    <source>
        <strain>Nichols</strain>
    </source>
</reference>
<reference key="3">
    <citation type="journal article" date="1998" name="Science">
        <title>Complete genome sequence of Treponema pallidum, the syphilis spirochete.</title>
        <authorList>
            <person name="Fraser C.M."/>
            <person name="Norris S.J."/>
            <person name="Weinstock G.M."/>
            <person name="White O."/>
            <person name="Sutton G.G."/>
            <person name="Dodson R.J."/>
            <person name="Gwinn M.L."/>
            <person name="Hickey E.K."/>
            <person name="Clayton R.A."/>
            <person name="Ketchum K.A."/>
            <person name="Sodergren E."/>
            <person name="Hardham J.M."/>
            <person name="McLeod M.P."/>
            <person name="Salzberg S.L."/>
            <person name="Peterson J.D."/>
            <person name="Khalak H.G."/>
            <person name="Richardson D.L."/>
            <person name="Howell J.K."/>
            <person name="Chidambaram M."/>
            <person name="Utterback T.R."/>
            <person name="McDonald L.A."/>
            <person name="Artiach P."/>
            <person name="Bowman C."/>
            <person name="Cotton M.D."/>
            <person name="Fujii C."/>
            <person name="Garland S.A."/>
            <person name="Hatch B."/>
            <person name="Horst K."/>
            <person name="Roberts K.M."/>
            <person name="Sandusky M."/>
            <person name="Weidman J.F."/>
            <person name="Smith H.O."/>
            <person name="Venter J.C."/>
        </authorList>
    </citation>
    <scope>NUCLEOTIDE SEQUENCE [LARGE SCALE GENOMIC DNA]</scope>
    <source>
        <strain>Nichols</strain>
    </source>
</reference>
<reference key="4">
    <citation type="journal article" date="1999" name="J. Bacteriol.">
        <title>Physicochemical evidence that Treponema pallidum TroA is a zinc-containing metalloprotein that lacks porin-like structure.</title>
        <authorList>
            <person name="Deka R.K."/>
            <person name="Lee Y.-H."/>
            <person name="Hagman K.E."/>
            <person name="Shevchenko D."/>
            <person name="Lingwood C.A."/>
            <person name="Hasemann C.A."/>
            <person name="Norgard M.V."/>
            <person name="Radolf J.D."/>
        </authorList>
    </citation>
    <scope>FUNCTION</scope>
</reference>
<reference evidence="6" key="5">
    <citation type="journal article" date="1999" name="Nat. Struct. Biol.">
        <title>Treponema pallidum TroA is a periplasmic zinc-binding protein with a helical backbone.</title>
        <authorList>
            <person name="Lee Y.-H."/>
            <person name="Deka R.K."/>
            <person name="Norgard M.V."/>
            <person name="Radolf J.D."/>
            <person name="Hasemann C.A."/>
        </authorList>
    </citation>
    <scope>X-RAY CRYSTALLOGRAPHY (1.8 ANGSTROMS) OF 23-313 IN COMPLEX WITH ZINC</scope>
</reference>
<sequence>MIRERICACVLALGMLTGFTHAFGSKDAAADGKPLVVTTIGMIADAVKNIAQGDVHLKGLMGPGVDPHLYTATAGDVEWLGNADLILYNGLHLETKMGEVFSKLRGSRLVVAVSETIPVSQRLSLEEAEFDPHVWFDVKLWSYSVKAVYESLCKLLPGKTREFTQRYQAYQQQLDKLDAYVRRKAQSLPAERRVLVTAHDAFGYFSRAYGFEVKGLQGVSTASEASAHDMQELAAFIAQRKLPAIFIESSIPHKNVEALRDAVQARGHVVQIGGELFSDAMGDAGTSEGTYVGMVTHNIDTIVAALAR</sequence>
<comment type="function">
    <text evidence="2">Part of the ATP-binding cassette (ABC) transport system TroABC involved in zinc import (PubMed:10400603). Binds zinc with high affinity and specificity and delivers it to the membrane permease for translocation into the cytoplasm (PubMed:10400603).</text>
</comment>
<comment type="subunit">
    <text>Monomer.</text>
</comment>
<comment type="subcellular location">
    <subcellularLocation>
        <location evidence="1">Periplasm</location>
    </subcellularLocation>
</comment>
<comment type="similarity">
    <text evidence="4">Belongs to the bacterial solute-binding protein 9 family.</text>
</comment>
<comment type="caution">
    <text evidence="5">Was originally thought to be an outer membrane protein with porin-like properties.</text>
</comment>
<comment type="sequence caution" evidence="4">
    <conflict type="erroneous initiation">
        <sequence resource="EMBL-CDS" id="AAA92353"/>
    </conflict>
</comment>
<feature type="signal peptide">
    <location>
        <begin position="1"/>
        <end position="22"/>
    </location>
</feature>
<feature type="chain" id="PRO_0000031872" description="Zinc-binding protein TroA">
    <location>
        <begin position="23"/>
        <end position="308"/>
    </location>
</feature>
<feature type="binding site" evidence="3 6">
    <location>
        <position position="68"/>
    </location>
    <ligand>
        <name>Zn(2+)</name>
        <dbReference type="ChEBI" id="CHEBI:29105"/>
    </ligand>
</feature>
<feature type="binding site" evidence="3 6">
    <location>
        <position position="133"/>
    </location>
    <ligand>
        <name>Zn(2+)</name>
        <dbReference type="ChEBI" id="CHEBI:29105"/>
    </ligand>
</feature>
<feature type="binding site" evidence="3 6">
    <location>
        <position position="199"/>
    </location>
    <ligand>
        <name>Zn(2+)</name>
        <dbReference type="ChEBI" id="CHEBI:29105"/>
    </ligand>
</feature>
<feature type="binding site" evidence="3 6">
    <location>
        <position position="279"/>
    </location>
    <ligand>
        <name>Zn(2+)</name>
        <dbReference type="ChEBI" id="CHEBI:29105"/>
    </ligand>
</feature>
<feature type="strand" evidence="8">
    <location>
        <begin position="35"/>
        <end position="40"/>
    </location>
</feature>
<feature type="helix" evidence="8">
    <location>
        <begin position="41"/>
        <end position="51"/>
    </location>
</feature>
<feature type="helix" evidence="8">
    <location>
        <begin position="52"/>
        <end position="54"/>
    </location>
</feature>
<feature type="strand" evidence="8">
    <location>
        <begin position="55"/>
        <end position="60"/>
    </location>
</feature>
<feature type="turn" evidence="8">
    <location>
        <begin position="67"/>
        <end position="69"/>
    </location>
</feature>
<feature type="helix" evidence="8">
    <location>
        <begin position="74"/>
        <end position="82"/>
    </location>
</feature>
<feature type="strand" evidence="8">
    <location>
        <begin position="84"/>
        <end position="88"/>
    </location>
</feature>
<feature type="turn" evidence="7">
    <location>
        <begin position="91"/>
        <end position="94"/>
    </location>
</feature>
<feature type="helix" evidence="7">
    <location>
        <begin position="95"/>
        <end position="97"/>
    </location>
</feature>
<feature type="helix" evidence="8">
    <location>
        <begin position="98"/>
        <end position="104"/>
    </location>
</feature>
<feature type="strand" evidence="8">
    <location>
        <begin position="107"/>
        <end position="112"/>
    </location>
</feature>
<feature type="helix" evidence="8">
    <location>
        <begin position="113"/>
        <end position="116"/>
    </location>
</feature>
<feature type="helix" evidence="8">
    <location>
        <begin position="119"/>
        <end position="121"/>
    </location>
</feature>
<feature type="turn" evidence="7">
    <location>
        <begin position="126"/>
        <end position="128"/>
    </location>
</feature>
<feature type="helix" evidence="8">
    <location>
        <begin position="134"/>
        <end position="136"/>
    </location>
</feature>
<feature type="helix" evidence="8">
    <location>
        <begin position="138"/>
        <end position="155"/>
    </location>
</feature>
<feature type="helix" evidence="8">
    <location>
        <begin position="157"/>
        <end position="159"/>
    </location>
</feature>
<feature type="helix" evidence="8">
    <location>
        <begin position="160"/>
        <end position="186"/>
    </location>
</feature>
<feature type="helix" evidence="8">
    <location>
        <begin position="190"/>
        <end position="192"/>
    </location>
</feature>
<feature type="strand" evidence="8">
    <location>
        <begin position="194"/>
        <end position="200"/>
    </location>
</feature>
<feature type="helix" evidence="8">
    <location>
        <begin position="203"/>
        <end position="209"/>
    </location>
</feature>
<feature type="strand" evidence="8">
    <location>
        <begin position="212"/>
        <end position="217"/>
    </location>
</feature>
<feature type="strand" evidence="7">
    <location>
        <begin position="221"/>
        <end position="223"/>
    </location>
</feature>
<feature type="helix" evidence="8">
    <location>
        <begin position="227"/>
        <end position="239"/>
    </location>
</feature>
<feature type="strand" evidence="8">
    <location>
        <begin position="243"/>
        <end position="248"/>
    </location>
</feature>
<feature type="helix" evidence="8">
    <location>
        <begin position="254"/>
        <end position="264"/>
    </location>
</feature>
<feature type="turn" evidence="8">
    <location>
        <begin position="265"/>
        <end position="267"/>
    </location>
</feature>
<feature type="strand" evidence="8">
    <location>
        <begin position="271"/>
        <end position="276"/>
    </location>
</feature>
<feature type="strand" evidence="8">
    <location>
        <begin position="278"/>
        <end position="280"/>
    </location>
</feature>
<feature type="helix" evidence="8">
    <location>
        <begin position="287"/>
        <end position="289"/>
    </location>
</feature>
<feature type="helix" evidence="8">
    <location>
        <begin position="291"/>
        <end position="306"/>
    </location>
</feature>
<gene>
    <name type="primary">troA</name>
    <name type="synonym">troMP1</name>
    <name type="ordered locus">TP_0163</name>
</gene>
<organism>
    <name type="scientific">Treponema pallidum (strain Nichols)</name>
    <dbReference type="NCBI Taxonomy" id="243276"/>
    <lineage>
        <taxon>Bacteria</taxon>
        <taxon>Pseudomonadati</taxon>
        <taxon>Spirochaetota</taxon>
        <taxon>Spirochaetia</taxon>
        <taxon>Spirochaetales</taxon>
        <taxon>Treponemataceae</taxon>
        <taxon>Treponema</taxon>
    </lineage>
</organism>
<evidence type="ECO:0000250" key="1">
    <source>
        <dbReference type="UniProtKB" id="A1B9L0"/>
    </source>
</evidence>
<evidence type="ECO:0000269" key="2">
    <source>
    </source>
</evidence>
<evidence type="ECO:0000269" key="3">
    <source>
    </source>
</evidence>
<evidence type="ECO:0000305" key="4"/>
<evidence type="ECO:0000305" key="5">
    <source>
    </source>
</evidence>
<evidence type="ECO:0007744" key="6">
    <source>
        <dbReference type="PDB" id="1TOA"/>
    </source>
</evidence>
<evidence type="ECO:0007829" key="7">
    <source>
        <dbReference type="PDB" id="1K0F"/>
    </source>
</evidence>
<evidence type="ECO:0007829" key="8">
    <source>
        <dbReference type="PDB" id="1TOA"/>
    </source>
</evidence>
<keyword id="KW-0002">3D-structure</keyword>
<keyword id="KW-0406">Ion transport</keyword>
<keyword id="KW-0479">Metal-binding</keyword>
<keyword id="KW-0574">Periplasm</keyword>
<keyword id="KW-1185">Reference proteome</keyword>
<keyword id="KW-0732">Signal</keyword>
<keyword id="KW-0813">Transport</keyword>
<keyword id="KW-0862">Zinc</keyword>
<keyword id="KW-0864">Zinc transport</keyword>
<proteinExistence type="evidence at protein level"/>
<name>TROA_TREPA</name>
<dbReference type="EMBL" id="U16363">
    <property type="protein sequence ID" value="AAA92353.1"/>
    <property type="status" value="ALT_INIT"/>
    <property type="molecule type" value="Genomic_DNA"/>
</dbReference>
<dbReference type="EMBL" id="U55214">
    <property type="protein sequence ID" value="AAC45725.1"/>
    <property type="molecule type" value="Genomic_DNA"/>
</dbReference>
<dbReference type="EMBL" id="AE000520">
    <property type="protein sequence ID" value="AAC65151.1"/>
    <property type="molecule type" value="Genomic_DNA"/>
</dbReference>
<dbReference type="PIR" id="A71360">
    <property type="entry name" value="A71360"/>
</dbReference>
<dbReference type="RefSeq" id="WP_010881610.1">
    <property type="nucleotide sequence ID" value="NC_021490.2"/>
</dbReference>
<dbReference type="PDB" id="1K0F">
    <property type="method" value="X-ray"/>
    <property type="resolution" value="2.50 A"/>
    <property type="chains" value="A=32-308"/>
</dbReference>
<dbReference type="PDB" id="1TOA">
    <property type="method" value="X-ray"/>
    <property type="resolution" value="1.80 A"/>
    <property type="chains" value="A/B=23-308"/>
</dbReference>
<dbReference type="PDBsum" id="1K0F"/>
<dbReference type="PDBsum" id="1TOA"/>
<dbReference type="SMR" id="P96116"/>
<dbReference type="IntAct" id="P96116">
    <property type="interactions" value="8"/>
</dbReference>
<dbReference type="STRING" id="243276.TP_0163"/>
<dbReference type="TCDB" id="3.A.1.15.8">
    <property type="family name" value="the atp-binding cassette (abc) superfamily"/>
</dbReference>
<dbReference type="EnsemblBacteria" id="AAC65151">
    <property type="protein sequence ID" value="AAC65151"/>
    <property type="gene ID" value="TP_0163"/>
</dbReference>
<dbReference type="GeneID" id="93875955"/>
<dbReference type="KEGG" id="tpa:TP_0163"/>
<dbReference type="KEGG" id="tpw:TPANIC_0163"/>
<dbReference type="eggNOG" id="COG0803">
    <property type="taxonomic scope" value="Bacteria"/>
</dbReference>
<dbReference type="HOGENOM" id="CLU_016838_1_1_12"/>
<dbReference type="OrthoDB" id="9793396at2"/>
<dbReference type="EvolutionaryTrace" id="P96116"/>
<dbReference type="Proteomes" id="UP000000811">
    <property type="component" value="Chromosome"/>
</dbReference>
<dbReference type="GO" id="GO:0042597">
    <property type="term" value="C:periplasmic space"/>
    <property type="evidence" value="ECO:0007669"/>
    <property type="project" value="UniProtKB-SubCell"/>
</dbReference>
<dbReference type="GO" id="GO:0046872">
    <property type="term" value="F:metal ion binding"/>
    <property type="evidence" value="ECO:0007669"/>
    <property type="project" value="UniProtKB-KW"/>
</dbReference>
<dbReference type="GO" id="GO:0007155">
    <property type="term" value="P:cell adhesion"/>
    <property type="evidence" value="ECO:0007669"/>
    <property type="project" value="InterPro"/>
</dbReference>
<dbReference type="GO" id="GO:0006829">
    <property type="term" value="P:zinc ion transport"/>
    <property type="evidence" value="ECO:0007669"/>
    <property type="project" value="UniProtKB-KW"/>
</dbReference>
<dbReference type="CDD" id="cd01016">
    <property type="entry name" value="TroA"/>
    <property type="match status" value="1"/>
</dbReference>
<dbReference type="Gene3D" id="3.40.50.1980">
    <property type="entry name" value="Nitrogenase molybdenum iron protein domain"/>
    <property type="match status" value="2"/>
</dbReference>
<dbReference type="InterPro" id="IPR006129">
    <property type="entry name" value="AdhesinB"/>
</dbReference>
<dbReference type="InterPro" id="IPR050492">
    <property type="entry name" value="Bact_metal-bind_prot9"/>
</dbReference>
<dbReference type="InterPro" id="IPR006128">
    <property type="entry name" value="Lipoprotein_PsaA-like"/>
</dbReference>
<dbReference type="InterPro" id="IPR006127">
    <property type="entry name" value="ZnuA-like"/>
</dbReference>
<dbReference type="PANTHER" id="PTHR42953">
    <property type="entry name" value="HIGH-AFFINITY ZINC UPTAKE SYSTEM PROTEIN ZNUA-RELATED"/>
    <property type="match status" value="1"/>
</dbReference>
<dbReference type="PANTHER" id="PTHR42953:SF1">
    <property type="entry name" value="METAL-BINDING PROTEIN HI_0362-RELATED"/>
    <property type="match status" value="1"/>
</dbReference>
<dbReference type="Pfam" id="PF01297">
    <property type="entry name" value="ZnuA"/>
    <property type="match status" value="1"/>
</dbReference>
<dbReference type="PRINTS" id="PR00691">
    <property type="entry name" value="ADHESINB"/>
</dbReference>
<dbReference type="PRINTS" id="PR00690">
    <property type="entry name" value="ADHESNFAMILY"/>
</dbReference>
<dbReference type="SUPFAM" id="SSF53807">
    <property type="entry name" value="Helical backbone' metal receptor"/>
    <property type="match status" value="1"/>
</dbReference>